<protein>
    <recommendedName>
        <fullName evidence="1">Glutamate-1-semialdehyde 2,1-aminomutase 2</fullName>
        <shortName evidence="1">GSA 2</shortName>
        <ecNumber evidence="1">5.4.3.8</ecNumber>
    </recommendedName>
    <alternativeName>
        <fullName evidence="1">Glutamate-1-semialdehyde aminotransferase 2</fullName>
        <shortName evidence="1">GSA-AT 2</shortName>
    </alternativeName>
</protein>
<accession>Q8NVU6</accession>
<feature type="chain" id="PRO_0000120453" description="Glutamate-1-semialdehyde 2,1-aminomutase 2">
    <location>
        <begin position="1"/>
        <end position="429"/>
    </location>
</feature>
<feature type="modified residue" description="N6-(pyridoxal phosphate)lysine" evidence="1">
    <location>
        <position position="268"/>
    </location>
</feature>
<keyword id="KW-0963">Cytoplasm</keyword>
<keyword id="KW-0413">Isomerase</keyword>
<keyword id="KW-0627">Porphyrin biosynthesis</keyword>
<keyword id="KW-0663">Pyridoxal phosphate</keyword>
<comment type="catalytic activity">
    <reaction evidence="1">
        <text>(S)-4-amino-5-oxopentanoate = 5-aminolevulinate</text>
        <dbReference type="Rhea" id="RHEA:14265"/>
        <dbReference type="ChEBI" id="CHEBI:57501"/>
        <dbReference type="ChEBI" id="CHEBI:356416"/>
        <dbReference type="EC" id="5.4.3.8"/>
    </reaction>
</comment>
<comment type="cofactor">
    <cofactor evidence="1">
        <name>pyridoxal 5'-phosphate</name>
        <dbReference type="ChEBI" id="CHEBI:597326"/>
    </cofactor>
</comment>
<comment type="pathway">
    <text evidence="1">Porphyrin-containing compound metabolism; protoporphyrin-IX biosynthesis; 5-aminolevulinate from L-glutamyl-tRNA(Glu): step 2/2.</text>
</comment>
<comment type="subunit">
    <text evidence="1">Homodimer.</text>
</comment>
<comment type="subcellular location">
    <subcellularLocation>
        <location evidence="1">Cytoplasm</location>
    </subcellularLocation>
</comment>
<comment type="similarity">
    <text evidence="1">Belongs to the class-III pyridoxal-phosphate-dependent aminotransferase family. HemL subfamily.</text>
</comment>
<evidence type="ECO:0000255" key="1">
    <source>
        <dbReference type="HAMAP-Rule" id="MF_00375"/>
    </source>
</evidence>
<dbReference type="EC" id="5.4.3.8" evidence="1"/>
<dbReference type="EMBL" id="BA000033">
    <property type="protein sequence ID" value="BAB95669.1"/>
    <property type="molecule type" value="Genomic_DNA"/>
</dbReference>
<dbReference type="RefSeq" id="WP_001011599.1">
    <property type="nucleotide sequence ID" value="NC_003923.1"/>
</dbReference>
<dbReference type="SMR" id="Q8NVU6"/>
<dbReference type="KEGG" id="sam:MW1804"/>
<dbReference type="HOGENOM" id="CLU_016922_1_5_9"/>
<dbReference type="UniPathway" id="UPA00251">
    <property type="reaction ID" value="UER00317"/>
</dbReference>
<dbReference type="GO" id="GO:0005737">
    <property type="term" value="C:cytoplasm"/>
    <property type="evidence" value="ECO:0007669"/>
    <property type="project" value="UniProtKB-SubCell"/>
</dbReference>
<dbReference type="GO" id="GO:0042286">
    <property type="term" value="F:glutamate-1-semialdehyde 2,1-aminomutase activity"/>
    <property type="evidence" value="ECO:0007669"/>
    <property type="project" value="UniProtKB-UniRule"/>
</dbReference>
<dbReference type="GO" id="GO:0030170">
    <property type="term" value="F:pyridoxal phosphate binding"/>
    <property type="evidence" value="ECO:0007669"/>
    <property type="project" value="InterPro"/>
</dbReference>
<dbReference type="GO" id="GO:0008483">
    <property type="term" value="F:transaminase activity"/>
    <property type="evidence" value="ECO:0007669"/>
    <property type="project" value="InterPro"/>
</dbReference>
<dbReference type="GO" id="GO:0006782">
    <property type="term" value="P:protoporphyrinogen IX biosynthetic process"/>
    <property type="evidence" value="ECO:0007669"/>
    <property type="project" value="UniProtKB-UniRule"/>
</dbReference>
<dbReference type="CDD" id="cd00610">
    <property type="entry name" value="OAT_like"/>
    <property type="match status" value="1"/>
</dbReference>
<dbReference type="FunFam" id="3.40.640.10:FF:000021">
    <property type="entry name" value="Glutamate-1-semialdehyde 2,1-aminomutase"/>
    <property type="match status" value="1"/>
</dbReference>
<dbReference type="Gene3D" id="3.90.1150.10">
    <property type="entry name" value="Aspartate Aminotransferase, domain 1"/>
    <property type="match status" value="1"/>
</dbReference>
<dbReference type="Gene3D" id="3.40.640.10">
    <property type="entry name" value="Type I PLP-dependent aspartate aminotransferase-like (Major domain)"/>
    <property type="match status" value="1"/>
</dbReference>
<dbReference type="HAMAP" id="MF_00375">
    <property type="entry name" value="HemL_aminotrans_3"/>
    <property type="match status" value="1"/>
</dbReference>
<dbReference type="InterPro" id="IPR004639">
    <property type="entry name" value="4pyrrol_synth_GluAld_NH2Trfase"/>
</dbReference>
<dbReference type="InterPro" id="IPR005814">
    <property type="entry name" value="Aminotrans_3"/>
</dbReference>
<dbReference type="InterPro" id="IPR049704">
    <property type="entry name" value="Aminotrans_3_PPA_site"/>
</dbReference>
<dbReference type="InterPro" id="IPR015424">
    <property type="entry name" value="PyrdxlP-dep_Trfase"/>
</dbReference>
<dbReference type="InterPro" id="IPR015421">
    <property type="entry name" value="PyrdxlP-dep_Trfase_major"/>
</dbReference>
<dbReference type="InterPro" id="IPR015422">
    <property type="entry name" value="PyrdxlP-dep_Trfase_small"/>
</dbReference>
<dbReference type="NCBIfam" id="TIGR00713">
    <property type="entry name" value="hemL"/>
    <property type="match status" value="1"/>
</dbReference>
<dbReference type="NCBIfam" id="NF000818">
    <property type="entry name" value="PRK00062.1"/>
    <property type="match status" value="1"/>
</dbReference>
<dbReference type="NCBIfam" id="NF009055">
    <property type="entry name" value="PRK12389.1"/>
    <property type="match status" value="1"/>
</dbReference>
<dbReference type="PANTHER" id="PTHR43713">
    <property type="entry name" value="GLUTAMATE-1-SEMIALDEHYDE 2,1-AMINOMUTASE"/>
    <property type="match status" value="1"/>
</dbReference>
<dbReference type="PANTHER" id="PTHR43713:SF1">
    <property type="entry name" value="GLUTAMATE-1-SEMIALDEHYDE 2,1-AMINOMUTASE 2"/>
    <property type="match status" value="1"/>
</dbReference>
<dbReference type="Pfam" id="PF00202">
    <property type="entry name" value="Aminotran_3"/>
    <property type="match status" value="1"/>
</dbReference>
<dbReference type="SUPFAM" id="SSF53383">
    <property type="entry name" value="PLP-dependent transferases"/>
    <property type="match status" value="1"/>
</dbReference>
<dbReference type="PROSITE" id="PS00600">
    <property type="entry name" value="AA_TRANSFER_CLASS_3"/>
    <property type="match status" value="1"/>
</dbReference>
<reference key="1">
    <citation type="journal article" date="2002" name="Lancet">
        <title>Genome and virulence determinants of high virulence community-acquired MRSA.</title>
        <authorList>
            <person name="Baba T."/>
            <person name="Takeuchi F."/>
            <person name="Kuroda M."/>
            <person name="Yuzawa H."/>
            <person name="Aoki K."/>
            <person name="Oguchi A."/>
            <person name="Nagai Y."/>
            <person name="Iwama N."/>
            <person name="Asano K."/>
            <person name="Naimi T."/>
            <person name="Kuroda H."/>
            <person name="Cui L."/>
            <person name="Yamamoto K."/>
            <person name="Hiramatsu K."/>
        </authorList>
    </citation>
    <scope>NUCLEOTIDE SEQUENCE [LARGE SCALE GENOMIC DNA]</scope>
    <source>
        <strain>MW2</strain>
    </source>
</reference>
<name>GSA2_STAAW</name>
<sequence>MNFSESERLQQLSNEYILGGVNSPSRSYKAVGGGAPVVMKEGHGAYLYDVDGNKFIDYLQAYGPIITGHAHPHITKAIQEQAAKGVLFGTPTELEIEFSKKLRDAIPSLEKIRFVNSGTEAVMTTIRVARAYTKRNKIIKFAGSYHGHSDLVLVAAGSGPSQLGSPDSAGVPESVAREVITVPFNDINAYKEAIEFWGDEIAAVLVEPIVGNFGMVMPQPGFLEEVNEISHNNGTLVIYDEVITAFRFHYGAAQDLLGVIPDLTAFGKIVGGGLPIGGYGGRQDIMEQVAPLGPAYQAGTMAGNPLSMKAGIALLEVLEQDGVYEKLDSLGQQLEEGLLKLIEKHNITATINRIYGSLTLYFTDEKVTHYDQVEHSDGEAFGKFFKLMLNQGINLAPSKFEAWFLTTEHTEEDIQQTLKAADYAFSQMK</sequence>
<gene>
    <name evidence="1" type="primary">hemL2</name>
    <name type="synonym">gsaB</name>
    <name type="ordered locus">MW1804</name>
</gene>
<proteinExistence type="inferred from homology"/>
<organism>
    <name type="scientific">Staphylococcus aureus (strain MW2)</name>
    <dbReference type="NCBI Taxonomy" id="196620"/>
    <lineage>
        <taxon>Bacteria</taxon>
        <taxon>Bacillati</taxon>
        <taxon>Bacillota</taxon>
        <taxon>Bacilli</taxon>
        <taxon>Bacillales</taxon>
        <taxon>Staphylococcaceae</taxon>
        <taxon>Staphylococcus</taxon>
    </lineage>
</organism>